<sequence>MTNIRKNHPLLKIVNQSFIDLPTPTSISAWWNFGSLLGICLAMQILTGLFLAMHYTSDTMTAFSSVTHICRDVNYGWLIRYLHANGASLFFMCLYLHIGRGLYYGSYTFLETWNIGIILLFTVMATAFMGYVLPWGQMSFWGATVITNLLSAIPYIGTDLVEWIWGGFSVDKATLTRFFAFHFILPFIITALVVVHLLFLHETGSNNPTGISSNMDTIPFHPYYTIKDILGLILMILLLMTLVLFYPDLLGDPDNYTPANPLNTPPHIKPEWYFLFAYAILRSIPNKLGGVLALVCSILVLAIIPLLHTAKQRSLMFRPISQCLFWLLAANLMILTWIGGQPVEHPFIIIGQVASISYFTIILVLMPIAGLIENKLMKW</sequence>
<organism>
    <name type="scientific">Dasypus novemcinctus</name>
    <name type="common">Nine-banded armadillo</name>
    <dbReference type="NCBI Taxonomy" id="9361"/>
    <lineage>
        <taxon>Eukaryota</taxon>
        <taxon>Metazoa</taxon>
        <taxon>Chordata</taxon>
        <taxon>Craniata</taxon>
        <taxon>Vertebrata</taxon>
        <taxon>Euteleostomi</taxon>
        <taxon>Mammalia</taxon>
        <taxon>Eutheria</taxon>
        <taxon>Xenarthra</taxon>
        <taxon>Cingulata</taxon>
        <taxon>Dasypodidae</taxon>
        <taxon>Dasypus</taxon>
    </lineage>
</organism>
<evidence type="ECO:0000250" key="1"/>
<evidence type="ECO:0000250" key="2">
    <source>
        <dbReference type="UniProtKB" id="P00157"/>
    </source>
</evidence>
<evidence type="ECO:0000255" key="3">
    <source>
        <dbReference type="PROSITE-ProRule" id="PRU00967"/>
    </source>
</evidence>
<evidence type="ECO:0000255" key="4">
    <source>
        <dbReference type="PROSITE-ProRule" id="PRU00968"/>
    </source>
</evidence>
<name>CYB_DASNO</name>
<gene>
    <name type="primary">MT-CYB</name>
    <name type="synonym">COB</name>
    <name type="synonym">CYTB</name>
    <name type="synonym">MTCYB</name>
</gene>
<geneLocation type="mitochondrion"/>
<keyword id="KW-0249">Electron transport</keyword>
<keyword id="KW-0349">Heme</keyword>
<keyword id="KW-0408">Iron</keyword>
<keyword id="KW-0472">Membrane</keyword>
<keyword id="KW-0479">Metal-binding</keyword>
<keyword id="KW-0496">Mitochondrion</keyword>
<keyword id="KW-0999">Mitochondrion inner membrane</keyword>
<keyword id="KW-0679">Respiratory chain</keyword>
<keyword id="KW-0812">Transmembrane</keyword>
<keyword id="KW-1133">Transmembrane helix</keyword>
<keyword id="KW-0813">Transport</keyword>
<keyword id="KW-0830">Ubiquinone</keyword>
<accession>O21337</accession>
<protein>
    <recommendedName>
        <fullName>Cytochrome b</fullName>
    </recommendedName>
    <alternativeName>
        <fullName>Complex III subunit 3</fullName>
    </alternativeName>
    <alternativeName>
        <fullName>Complex III subunit III</fullName>
    </alternativeName>
    <alternativeName>
        <fullName>Cytochrome b-c1 complex subunit 3</fullName>
    </alternativeName>
    <alternativeName>
        <fullName>Ubiquinol-cytochrome-c reductase complex cytochrome b subunit</fullName>
    </alternativeName>
</protein>
<reference key="1">
    <citation type="journal article" date="1997" name="Mol. Biol. Evol.">
        <title>Phylogenetic analyses of mitochondrial DNA suggest a sister group relationship between Xenarthra (Edentata) and Ferungulates.</title>
        <authorList>
            <person name="Arnason U."/>
            <person name="Gullberg A."/>
            <person name="Janke A."/>
        </authorList>
    </citation>
    <scope>NUCLEOTIDE SEQUENCE [GENOMIC DNA]</scope>
</reference>
<comment type="function">
    <text evidence="2">Component of the ubiquinol-cytochrome c reductase complex (complex III or cytochrome b-c1 complex) that is part of the mitochondrial respiratory chain. The b-c1 complex mediates electron transfer from ubiquinol to cytochrome c. Contributes to the generation of a proton gradient across the mitochondrial membrane that is then used for ATP synthesis.</text>
</comment>
<comment type="cofactor">
    <cofactor evidence="2">
        <name>heme b</name>
        <dbReference type="ChEBI" id="CHEBI:60344"/>
    </cofactor>
    <text evidence="2">Binds 2 heme b groups non-covalently.</text>
</comment>
<comment type="subunit">
    <text evidence="2">The cytochrome bc1 complex contains 11 subunits: 3 respiratory subunits (MT-CYB, CYC1 and UQCRFS1), 2 core proteins (UQCRC1 and UQCRC2) and 6 low-molecular weight proteins (UQCRH/QCR6, UQCRB/QCR7, UQCRQ/QCR8, UQCR10/QCR9, UQCR11/QCR10 and a cleavage product of UQCRFS1). This cytochrome bc1 complex then forms a dimer.</text>
</comment>
<comment type="subcellular location">
    <subcellularLocation>
        <location evidence="2">Mitochondrion inner membrane</location>
        <topology evidence="2">Multi-pass membrane protein</topology>
    </subcellularLocation>
</comment>
<comment type="miscellaneous">
    <text evidence="1">Heme 1 (or BL or b562) is low-potential and absorbs at about 562 nm, and heme 2 (or BH or b566) is high-potential and absorbs at about 566 nm.</text>
</comment>
<comment type="similarity">
    <text evidence="3 4">Belongs to the cytochrome b family.</text>
</comment>
<comment type="caution">
    <text evidence="2">The full-length protein contains only eight transmembrane helices, not nine as predicted by bioinformatics tools.</text>
</comment>
<feature type="chain" id="PRO_0000060868" description="Cytochrome b">
    <location>
        <begin position="1"/>
        <end position="379"/>
    </location>
</feature>
<feature type="transmembrane region" description="Helical" evidence="2">
    <location>
        <begin position="33"/>
        <end position="53"/>
    </location>
</feature>
<feature type="transmembrane region" description="Helical" evidence="2">
    <location>
        <begin position="77"/>
        <end position="98"/>
    </location>
</feature>
<feature type="transmembrane region" description="Helical" evidence="2">
    <location>
        <begin position="113"/>
        <end position="133"/>
    </location>
</feature>
<feature type="transmembrane region" description="Helical" evidence="2">
    <location>
        <begin position="178"/>
        <end position="198"/>
    </location>
</feature>
<feature type="transmembrane region" description="Helical" evidence="2">
    <location>
        <begin position="226"/>
        <end position="246"/>
    </location>
</feature>
<feature type="transmembrane region" description="Helical" evidence="2">
    <location>
        <begin position="288"/>
        <end position="308"/>
    </location>
</feature>
<feature type="transmembrane region" description="Helical" evidence="2">
    <location>
        <begin position="320"/>
        <end position="340"/>
    </location>
</feature>
<feature type="transmembrane region" description="Helical" evidence="2">
    <location>
        <begin position="347"/>
        <end position="367"/>
    </location>
</feature>
<feature type="binding site" description="axial binding residue" evidence="2">
    <location>
        <position position="83"/>
    </location>
    <ligand>
        <name>heme b</name>
        <dbReference type="ChEBI" id="CHEBI:60344"/>
        <label>b562</label>
    </ligand>
    <ligandPart>
        <name>Fe</name>
        <dbReference type="ChEBI" id="CHEBI:18248"/>
    </ligandPart>
</feature>
<feature type="binding site" description="axial binding residue" evidence="2">
    <location>
        <position position="97"/>
    </location>
    <ligand>
        <name>heme b</name>
        <dbReference type="ChEBI" id="CHEBI:60344"/>
        <label>b566</label>
    </ligand>
    <ligandPart>
        <name>Fe</name>
        <dbReference type="ChEBI" id="CHEBI:18248"/>
    </ligandPart>
</feature>
<feature type="binding site" description="axial binding residue" evidence="2">
    <location>
        <position position="182"/>
    </location>
    <ligand>
        <name>heme b</name>
        <dbReference type="ChEBI" id="CHEBI:60344"/>
        <label>b562</label>
    </ligand>
    <ligandPart>
        <name>Fe</name>
        <dbReference type="ChEBI" id="CHEBI:18248"/>
    </ligandPart>
</feature>
<feature type="binding site" description="axial binding residue" evidence="2">
    <location>
        <position position="196"/>
    </location>
    <ligand>
        <name>heme b</name>
        <dbReference type="ChEBI" id="CHEBI:60344"/>
        <label>b566</label>
    </ligand>
    <ligandPart>
        <name>Fe</name>
        <dbReference type="ChEBI" id="CHEBI:18248"/>
    </ligandPart>
</feature>
<feature type="binding site" evidence="2">
    <location>
        <position position="201"/>
    </location>
    <ligand>
        <name>a ubiquinone</name>
        <dbReference type="ChEBI" id="CHEBI:16389"/>
    </ligand>
</feature>
<proteinExistence type="inferred from homology"/>
<dbReference type="EMBL" id="Y11832">
    <property type="protein sequence ID" value="CAA72519.1"/>
    <property type="molecule type" value="Genomic_DNA"/>
</dbReference>
<dbReference type="PIR" id="T11453">
    <property type="entry name" value="T11453"/>
</dbReference>
<dbReference type="RefSeq" id="NP_007471.1">
    <property type="nucleotide sequence ID" value="NC_001821.1"/>
</dbReference>
<dbReference type="SMR" id="O21337"/>
<dbReference type="GeneID" id="808127"/>
<dbReference type="KEGG" id="dnm:808127"/>
<dbReference type="CTD" id="4519"/>
<dbReference type="HOGENOM" id="CLU_031114_3_0_1"/>
<dbReference type="OMA" id="NISAWWN"/>
<dbReference type="GO" id="GO:0005743">
    <property type="term" value="C:mitochondrial inner membrane"/>
    <property type="evidence" value="ECO:0007669"/>
    <property type="project" value="UniProtKB-SubCell"/>
</dbReference>
<dbReference type="GO" id="GO:0045275">
    <property type="term" value="C:respiratory chain complex III"/>
    <property type="evidence" value="ECO:0007669"/>
    <property type="project" value="InterPro"/>
</dbReference>
<dbReference type="GO" id="GO:0046872">
    <property type="term" value="F:metal ion binding"/>
    <property type="evidence" value="ECO:0007669"/>
    <property type="project" value="UniProtKB-KW"/>
</dbReference>
<dbReference type="GO" id="GO:0008121">
    <property type="term" value="F:ubiquinol-cytochrome-c reductase activity"/>
    <property type="evidence" value="ECO:0007669"/>
    <property type="project" value="InterPro"/>
</dbReference>
<dbReference type="GO" id="GO:0006122">
    <property type="term" value="P:mitochondrial electron transport, ubiquinol to cytochrome c"/>
    <property type="evidence" value="ECO:0007669"/>
    <property type="project" value="TreeGrafter"/>
</dbReference>
<dbReference type="CDD" id="cd00290">
    <property type="entry name" value="cytochrome_b_C"/>
    <property type="match status" value="1"/>
</dbReference>
<dbReference type="CDD" id="cd00284">
    <property type="entry name" value="Cytochrome_b_N"/>
    <property type="match status" value="1"/>
</dbReference>
<dbReference type="FunFam" id="1.20.810.10:FF:000002">
    <property type="entry name" value="Cytochrome b"/>
    <property type="match status" value="1"/>
</dbReference>
<dbReference type="Gene3D" id="1.20.810.10">
    <property type="entry name" value="Cytochrome Bc1 Complex, Chain C"/>
    <property type="match status" value="1"/>
</dbReference>
<dbReference type="InterPro" id="IPR005798">
    <property type="entry name" value="Cyt_b/b6_C"/>
</dbReference>
<dbReference type="InterPro" id="IPR036150">
    <property type="entry name" value="Cyt_b/b6_C_sf"/>
</dbReference>
<dbReference type="InterPro" id="IPR005797">
    <property type="entry name" value="Cyt_b/b6_N"/>
</dbReference>
<dbReference type="InterPro" id="IPR027387">
    <property type="entry name" value="Cytb/b6-like_sf"/>
</dbReference>
<dbReference type="InterPro" id="IPR030689">
    <property type="entry name" value="Cytochrome_b"/>
</dbReference>
<dbReference type="InterPro" id="IPR048260">
    <property type="entry name" value="Cytochrome_b_C_euk/bac"/>
</dbReference>
<dbReference type="InterPro" id="IPR048259">
    <property type="entry name" value="Cytochrome_b_N_euk/bac"/>
</dbReference>
<dbReference type="InterPro" id="IPR016174">
    <property type="entry name" value="Di-haem_cyt_TM"/>
</dbReference>
<dbReference type="PANTHER" id="PTHR19271">
    <property type="entry name" value="CYTOCHROME B"/>
    <property type="match status" value="1"/>
</dbReference>
<dbReference type="PANTHER" id="PTHR19271:SF16">
    <property type="entry name" value="CYTOCHROME B"/>
    <property type="match status" value="1"/>
</dbReference>
<dbReference type="Pfam" id="PF00032">
    <property type="entry name" value="Cytochrom_B_C"/>
    <property type="match status" value="1"/>
</dbReference>
<dbReference type="Pfam" id="PF00033">
    <property type="entry name" value="Cytochrome_B"/>
    <property type="match status" value="1"/>
</dbReference>
<dbReference type="PIRSF" id="PIRSF038885">
    <property type="entry name" value="COB"/>
    <property type="match status" value="1"/>
</dbReference>
<dbReference type="SUPFAM" id="SSF81648">
    <property type="entry name" value="a domain/subunit of cytochrome bc1 complex (Ubiquinol-cytochrome c reductase)"/>
    <property type="match status" value="1"/>
</dbReference>
<dbReference type="SUPFAM" id="SSF81342">
    <property type="entry name" value="Transmembrane di-heme cytochromes"/>
    <property type="match status" value="1"/>
</dbReference>
<dbReference type="PROSITE" id="PS51003">
    <property type="entry name" value="CYTB_CTER"/>
    <property type="match status" value="1"/>
</dbReference>
<dbReference type="PROSITE" id="PS51002">
    <property type="entry name" value="CYTB_NTER"/>
    <property type="match status" value="1"/>
</dbReference>